<dbReference type="EC" id="2.1.3.5" evidence="2"/>
<dbReference type="EMBL" id="D42020">
    <property type="protein sequence ID" value="BAA07638.1"/>
    <property type="molecule type" value="Genomic_DNA"/>
</dbReference>
<dbReference type="EMBL" id="U82664">
    <property type="protein sequence ID" value="AAB40270.1"/>
    <property type="molecule type" value="Genomic_DNA"/>
</dbReference>
<dbReference type="EMBL" id="U00096">
    <property type="protein sequence ID" value="AAC73620.1"/>
    <property type="molecule type" value="Genomic_DNA"/>
</dbReference>
<dbReference type="EMBL" id="AP009048">
    <property type="protein sequence ID" value="BAE76296.1"/>
    <property type="molecule type" value="Genomic_DNA"/>
</dbReference>
<dbReference type="EMBL" id="X05968">
    <property type="status" value="NOT_ANNOTATED_CDS"/>
    <property type="molecule type" value="Genomic_DNA"/>
</dbReference>
<dbReference type="PIR" id="S60201">
    <property type="entry name" value="S60201"/>
</dbReference>
<dbReference type="RefSeq" id="NP_415051.1">
    <property type="nucleotide sequence ID" value="NC_000913.3"/>
</dbReference>
<dbReference type="RefSeq" id="WP_000580829.1">
    <property type="nucleotide sequence ID" value="NZ_LN832404.1"/>
</dbReference>
<dbReference type="PDB" id="3DMY">
    <property type="method" value="X-ray"/>
    <property type="resolution" value="2.07 A"/>
    <property type="chains" value="A/B=82-555"/>
</dbReference>
<dbReference type="PDBsum" id="3DMY"/>
<dbReference type="SMR" id="Q47208"/>
<dbReference type="BioGRID" id="4261244">
    <property type="interactions" value="133"/>
</dbReference>
<dbReference type="FunCoup" id="Q47208">
    <property type="interactions" value="16"/>
</dbReference>
<dbReference type="IntAct" id="Q47208">
    <property type="interactions" value="3"/>
</dbReference>
<dbReference type="STRING" id="511145.b0518"/>
<dbReference type="PaxDb" id="511145-b0518"/>
<dbReference type="EnsemblBacteria" id="AAC73620">
    <property type="protein sequence ID" value="AAC73620"/>
    <property type="gene ID" value="b0518"/>
</dbReference>
<dbReference type="GeneID" id="946298"/>
<dbReference type="KEGG" id="ecj:JW0506"/>
<dbReference type="KEGG" id="eco:b0518"/>
<dbReference type="KEGG" id="ecoc:C3026_02540"/>
<dbReference type="PATRIC" id="fig|1411691.4.peg.1760"/>
<dbReference type="EchoBASE" id="EB3180"/>
<dbReference type="eggNOG" id="COG0074">
    <property type="taxonomic scope" value="Bacteria"/>
</dbReference>
<dbReference type="HOGENOM" id="CLU_026233_1_0_6"/>
<dbReference type="InParanoid" id="Q47208"/>
<dbReference type="OMA" id="HPMIDYS"/>
<dbReference type="OrthoDB" id="5580580at2"/>
<dbReference type="PhylomeDB" id="Q47208"/>
<dbReference type="BioCyc" id="EcoCyc:G6287-MONOMER"/>
<dbReference type="UniPathway" id="UPA00395"/>
<dbReference type="EvolutionaryTrace" id="Q47208"/>
<dbReference type="PRO" id="PR:Q47208"/>
<dbReference type="Proteomes" id="UP000000625">
    <property type="component" value="Chromosome"/>
</dbReference>
<dbReference type="GO" id="GO:0005829">
    <property type="term" value="C:cytosol"/>
    <property type="evidence" value="ECO:0000318"/>
    <property type="project" value="GO_Central"/>
</dbReference>
<dbReference type="GO" id="GO:0009361">
    <property type="term" value="C:succinate-CoA ligase complex (ADP-forming)"/>
    <property type="evidence" value="ECO:0000318"/>
    <property type="project" value="GO_Central"/>
</dbReference>
<dbReference type="GO" id="GO:0004775">
    <property type="term" value="F:succinate-CoA ligase (ADP-forming) activity"/>
    <property type="evidence" value="ECO:0000318"/>
    <property type="project" value="GO_Central"/>
</dbReference>
<dbReference type="GO" id="GO:0004776">
    <property type="term" value="F:succinate-CoA ligase (GDP-forming) activity"/>
    <property type="evidence" value="ECO:0000318"/>
    <property type="project" value="GO_Central"/>
</dbReference>
<dbReference type="GO" id="GO:0016740">
    <property type="term" value="F:transferase activity"/>
    <property type="evidence" value="ECO:0007669"/>
    <property type="project" value="UniProtKB-KW"/>
</dbReference>
<dbReference type="GO" id="GO:0071973">
    <property type="term" value="P:bacterial-type flagellum-dependent cell motility"/>
    <property type="evidence" value="ECO:0000315"/>
    <property type="project" value="EcoCyc"/>
</dbReference>
<dbReference type="GO" id="GO:0006099">
    <property type="term" value="P:tricarboxylic acid cycle"/>
    <property type="evidence" value="ECO:0000318"/>
    <property type="project" value="GO_Central"/>
</dbReference>
<dbReference type="FunFam" id="3.40.50.261:FF:000014">
    <property type="entry name" value="Acyl-CoA synthetase FdrA"/>
    <property type="match status" value="1"/>
</dbReference>
<dbReference type="FunFam" id="3.40.50.261:FF:000015">
    <property type="entry name" value="Acyl-CoA synthetase FdrA"/>
    <property type="match status" value="1"/>
</dbReference>
<dbReference type="Gene3D" id="3.40.50.720">
    <property type="entry name" value="NAD(P)-binding Rossmann-like Domain"/>
    <property type="match status" value="1"/>
</dbReference>
<dbReference type="Gene3D" id="3.40.50.261">
    <property type="entry name" value="Succinyl-CoA synthetase domains"/>
    <property type="match status" value="2"/>
</dbReference>
<dbReference type="InterPro" id="IPR003781">
    <property type="entry name" value="CoA-bd"/>
</dbReference>
<dbReference type="InterPro" id="IPR005811">
    <property type="entry name" value="SUCC_ACL_C"/>
</dbReference>
<dbReference type="InterPro" id="IPR016102">
    <property type="entry name" value="Succinyl-CoA_synth-like"/>
</dbReference>
<dbReference type="NCBIfam" id="NF004760">
    <property type="entry name" value="PRK06091.1"/>
    <property type="match status" value="1"/>
</dbReference>
<dbReference type="PANTHER" id="PTHR11117:SF24">
    <property type="entry name" value="PROTEIN FDRA"/>
    <property type="match status" value="1"/>
</dbReference>
<dbReference type="PANTHER" id="PTHR11117">
    <property type="entry name" value="SUCCINYL-COA LIGASE SUBUNIT ALPHA"/>
    <property type="match status" value="1"/>
</dbReference>
<dbReference type="Pfam" id="PF02629">
    <property type="entry name" value="CoA_binding"/>
    <property type="match status" value="1"/>
</dbReference>
<dbReference type="Pfam" id="PF00549">
    <property type="entry name" value="Ligase_CoA"/>
    <property type="match status" value="1"/>
</dbReference>
<dbReference type="SUPFAM" id="SSF52210">
    <property type="entry name" value="Succinyl-CoA synthetase domains"/>
    <property type="match status" value="2"/>
</dbReference>
<protein>
    <recommendedName>
        <fullName evidence="6">Oxamate carbamoyltransferase subunit AllF</fullName>
        <shortName evidence="6">OXTCase subunit AllF</shortName>
        <ecNumber evidence="2">2.1.3.5</ecNumber>
    </recommendedName>
    <alternativeName>
        <fullName evidence="4">Oxamic transcarbamylase subunit AllF</fullName>
    </alternativeName>
</protein>
<gene>
    <name evidence="4" type="primary">allF</name>
    <name evidence="5" type="synonym">fdrA</name>
    <name type="synonym">ylbD</name>
    <name type="ordered locus">b0518</name>
    <name type="ordered locus">JW0506</name>
</gene>
<keyword id="KW-0002">3D-structure</keyword>
<keyword id="KW-0460">Magnesium</keyword>
<keyword id="KW-1185">Reference proteome</keyword>
<keyword id="KW-0808">Transferase</keyword>
<comment type="function">
    <text evidence="1 2">Component of a carbamoyltransferase involved in the anaerobic nitrogen utilization via the assimilation of allantoin (PubMed:34494882, PubMed:38888336). Catalyzes the conversion of oxalurate (N-carbamoyl-2-oxoglycine) to oxamate and carbamoyl phosphate (PubMed:38888336).</text>
</comment>
<comment type="catalytic activity">
    <reaction evidence="2">
        <text>oxamate + carbamoyl phosphate = N-carbamoyl-2-oxoglycine + phosphate</text>
        <dbReference type="Rhea" id="RHEA:22984"/>
        <dbReference type="ChEBI" id="CHEBI:43474"/>
        <dbReference type="ChEBI" id="CHEBI:57824"/>
        <dbReference type="ChEBI" id="CHEBI:58228"/>
        <dbReference type="ChEBI" id="CHEBI:58363"/>
        <dbReference type="EC" id="2.1.3.5"/>
    </reaction>
    <physiologicalReaction direction="right-to-left" evidence="7">
        <dbReference type="Rhea" id="RHEA:22986"/>
    </physiologicalReaction>
</comment>
<comment type="cofactor">
    <cofactor evidence="2">
        <name>Mg(2+)</name>
        <dbReference type="ChEBI" id="CHEBI:18420"/>
    </cofactor>
</comment>
<comment type="biophysicochemical properties">
    <kinetics>
        <KM evidence="2">36.9 mM for oxamate</KM>
        <KM evidence="2">1.3 mM for carbamoyl phosphate</KM>
        <Vmax evidence="2">27.0 umol/min/mg enzyme toward oxamate</Vmax>
        <Vmax evidence="2">15.4 umol/min/mg enzyme toward carbamoyl phosphate</Vmax>
        <text evidence="2">kcat is 58.5 sec(-1) with oxamate as substrate. kcat is 35.5 sec(-1) with carbamoyl phosphate as substrate.</text>
    </kinetics>
    <phDependence>
        <text evidence="2">Optimum pH is 9.0 (PubMed:38888336). No enzyme activity is detected at pH 6.0 and 7.0 (PubMed:38888336). Activity increases in the pH range of 8.0-9.0 (PubMed:38888336).</text>
    </phDependence>
    <temperatureDependence>
        <text evidence="2">Optimum temperature is 30 degrees Celsius.</text>
    </temperatureDependence>
</comment>
<comment type="pathway">
    <text evidence="2">Nitrogen metabolism; (S)-allantoin degradation.</text>
</comment>
<comment type="subunit">
    <text evidence="2">The OXTCase is composed of 3 subunits, AllF, AllG and AllH.</text>
</comment>
<comment type="induction">
    <text evidence="1">Induced by allantoin under anaerobic conditions.</text>
</comment>
<comment type="disruption phenotype">
    <text evidence="1 2">The deletion mutant cannot produce oxamate during anaerobic allantoin degradation (PubMed:34494882, PubMed:38888336). However, the levels of oxalate, produced via a glyoxylate shunt, significantly increase (PubMed:38888336).</text>
</comment>
<comment type="miscellaneous">
    <text evidence="2">Oxalurate could not be used as a standard substance due to its unavailability, and the enzyme reaction was performed in the reverse direction: the synthesis of oxalurate from oxamate and carbamoyl phosphate.</text>
</comment>
<comment type="miscellaneous">
    <text evidence="3">Multicopy suppressor of dominant negative ftsH mutations.</text>
</comment>
<comment type="similarity">
    <text evidence="6">Belongs to the AllF family.</text>
</comment>
<name>ALLF_ECOLI</name>
<proteinExistence type="evidence at protein level"/>
<reference key="1">
    <citation type="journal article" date="1995" name="Mol. Gen. Genet.">
        <title>A new Escherichia coli gene, fdrA, identified by suppression analysis of dominant negative FtsH mutations.</title>
        <authorList>
            <person name="Akiyama Y."/>
            <person name="Ito K."/>
        </authorList>
    </citation>
    <scope>NUCLEOTIDE SEQUENCE [GENOMIC DNA]</scope>
    <source>
        <strain>K12</strain>
    </source>
</reference>
<reference key="2">
    <citation type="submission" date="1997-01" db="EMBL/GenBank/DDBJ databases">
        <title>Sequence of minutes 4-25 of Escherichia coli.</title>
        <authorList>
            <person name="Chung E."/>
            <person name="Allen E."/>
            <person name="Araujo R."/>
            <person name="Aparicio A.M."/>
            <person name="Davis K."/>
            <person name="Duncan M."/>
            <person name="Federspiel N."/>
            <person name="Hyman R."/>
            <person name="Kalman S."/>
            <person name="Komp C."/>
            <person name="Kurdi O."/>
            <person name="Lew H."/>
            <person name="Lin D."/>
            <person name="Namath A."/>
            <person name="Oefner P."/>
            <person name="Roberts D."/>
            <person name="Schramm S."/>
            <person name="Davis R.W."/>
        </authorList>
    </citation>
    <scope>NUCLEOTIDE SEQUENCE [LARGE SCALE GENOMIC DNA]</scope>
    <source>
        <strain>K12 / MG1655 / ATCC 47076</strain>
    </source>
</reference>
<reference key="3">
    <citation type="journal article" date="1997" name="Science">
        <title>The complete genome sequence of Escherichia coli K-12.</title>
        <authorList>
            <person name="Blattner F.R."/>
            <person name="Plunkett G. III"/>
            <person name="Bloch C.A."/>
            <person name="Perna N.T."/>
            <person name="Burland V."/>
            <person name="Riley M."/>
            <person name="Collado-Vides J."/>
            <person name="Glasner J.D."/>
            <person name="Rode C.K."/>
            <person name="Mayhew G.F."/>
            <person name="Gregor J."/>
            <person name="Davis N.W."/>
            <person name="Kirkpatrick H.A."/>
            <person name="Goeden M.A."/>
            <person name="Rose D.J."/>
            <person name="Mau B."/>
            <person name="Shao Y."/>
        </authorList>
    </citation>
    <scope>NUCLEOTIDE SEQUENCE [LARGE SCALE GENOMIC DNA]</scope>
    <source>
        <strain>K12 / MG1655 / ATCC 47076</strain>
    </source>
</reference>
<reference key="4">
    <citation type="journal article" date="2006" name="Mol. Syst. Biol.">
        <title>Highly accurate genome sequences of Escherichia coli K-12 strains MG1655 and W3110.</title>
        <authorList>
            <person name="Hayashi K."/>
            <person name="Morooka N."/>
            <person name="Yamamoto Y."/>
            <person name="Fujita K."/>
            <person name="Isono K."/>
            <person name="Choi S."/>
            <person name="Ohtsubo E."/>
            <person name="Baba T."/>
            <person name="Wanner B.L."/>
            <person name="Mori H."/>
            <person name="Horiuchi T."/>
        </authorList>
    </citation>
    <scope>NUCLEOTIDE SEQUENCE [LARGE SCALE GENOMIC DNA]</scope>
    <source>
        <strain>K12 / W3110 / ATCC 27325 / DSM 5911</strain>
    </source>
</reference>
<reference key="5">
    <citation type="journal article" date="1987" name="Nucleic Acids Res.">
        <title>Random cloning of bent DNA segments from Escherichia coli chromosome and primary characterization of their structures.</title>
        <authorList>
            <person name="Mizuno T."/>
        </authorList>
    </citation>
    <scope>NUCLEOTIDE SEQUENCE [GENOMIC DNA] OF 2-71</scope>
</reference>
<reference key="6">
    <citation type="journal article" date="2021" name="MSphere">
        <title>An Escherichia coli FdrA Variant Derived from Syntrophic Coculture with a Methanogen Increases Succinate Production Due to Changes in Allantoin Degradation.</title>
        <authorList>
            <person name="Kim N.Y."/>
            <person name="Lee Y.J."/>
            <person name="Park J.W."/>
            <person name="Kim S.N."/>
            <person name="Kim E.Y."/>
            <person name="Kim Y."/>
            <person name="Kim O.B."/>
        </authorList>
    </citation>
    <scope>FUNCTION</scope>
    <scope>INDUCTION</scope>
    <scope>DISRUPTION PHENOTYPE</scope>
    <scope>MUTAGENESIS OF ASP-296</scope>
    <source>
        <strain>K12 / MG1655 / ATCC 47076</strain>
    </source>
</reference>
<reference key="7">
    <citation type="journal article" date="2024" name="Appl. Environ. Microbiol.">
        <title>Oxamic transcarbamylase of Escherichia coli is encoded by the three genes allFGH (formerly fdrA, ylbE, and ylbF).</title>
        <authorList>
            <person name="Kim N.Y."/>
            <person name="Kim O.B."/>
        </authorList>
    </citation>
    <scope>FUNCTION</scope>
    <scope>CATALYTIC ACTIVITY</scope>
    <scope>COFACTOR</scope>
    <scope>BIOPHYSICOCHEMICAL PROPERTIES</scope>
    <scope>PATHWAY</scope>
    <scope>SUBUNIT</scope>
    <scope>DISRUPTION PHENOTYPE</scope>
    <source>
        <strain>K12 / MG1655 / ATCC 47076</strain>
    </source>
</reference>
<reference evidence="8" key="8">
    <citation type="submission" date="2008-07" db="PDB data bank">
        <title>Crystal Structure of a predicted Acyl-CoA-synthetase from E.coli.</title>
        <authorList>
            <person name="Sugadev R."/>
            <person name="Burley S.K."/>
            <person name="Swaminathan S."/>
        </authorList>
    </citation>
    <scope>X-RAY CRYSTALLOGRAPHY (2.07 ANGSTROMS) OF 82-555</scope>
</reference>
<evidence type="ECO:0000269" key="1">
    <source>
    </source>
</evidence>
<evidence type="ECO:0000269" key="2">
    <source>
    </source>
</evidence>
<evidence type="ECO:0000269" key="3">
    <source>
    </source>
</evidence>
<evidence type="ECO:0000303" key="4">
    <source>
    </source>
</evidence>
<evidence type="ECO:0000303" key="5">
    <source>
    </source>
</evidence>
<evidence type="ECO:0000305" key="6"/>
<evidence type="ECO:0000305" key="7">
    <source>
    </source>
</evidence>
<evidence type="ECO:0007744" key="8">
    <source>
        <dbReference type="PDB" id="3DMY"/>
    </source>
</evidence>
<evidence type="ECO:0007829" key="9">
    <source>
        <dbReference type="PDB" id="3DMY"/>
    </source>
</evidence>
<feature type="chain" id="PRO_0000087216" description="Oxamate carbamoyltransferase subunit AllF">
    <location>
        <begin position="1"/>
        <end position="555"/>
    </location>
</feature>
<feature type="mutagenesis site" description="Increases oxamate production." evidence="1">
    <original>D</original>
    <variation>Y</variation>
    <location>
        <position position="296"/>
    </location>
</feature>
<feature type="strand" evidence="9">
    <location>
        <begin position="103"/>
        <end position="107"/>
    </location>
</feature>
<feature type="helix" evidence="9">
    <location>
        <begin position="108"/>
        <end position="114"/>
    </location>
</feature>
<feature type="strand" evidence="9">
    <location>
        <begin position="120"/>
        <end position="123"/>
    </location>
</feature>
<feature type="helix" evidence="9">
    <location>
        <begin position="127"/>
        <end position="139"/>
    </location>
</feature>
<feature type="strand" evidence="9">
    <location>
        <begin position="143"/>
        <end position="146"/>
    </location>
</feature>
<feature type="helix" evidence="9">
    <location>
        <begin position="153"/>
        <end position="165"/>
    </location>
</feature>
<feature type="strand" evidence="9">
    <location>
        <begin position="177"/>
        <end position="180"/>
    </location>
</feature>
<feature type="strand" evidence="9">
    <location>
        <begin position="183"/>
        <end position="187"/>
    </location>
</feature>
<feature type="strand" evidence="9">
    <location>
        <begin position="195"/>
        <end position="201"/>
    </location>
</feature>
<feature type="helix" evidence="9">
    <location>
        <begin position="204"/>
        <end position="215"/>
    </location>
</feature>
<feature type="strand" evidence="9">
    <location>
        <begin position="220"/>
        <end position="225"/>
    </location>
</feature>
<feature type="turn" evidence="9">
    <location>
        <begin position="228"/>
        <end position="231"/>
    </location>
</feature>
<feature type="turn" evidence="9">
    <location>
        <begin position="233"/>
        <end position="237"/>
    </location>
</feature>
<feature type="helix" evidence="9">
    <location>
        <begin position="238"/>
        <end position="248"/>
    </location>
</feature>
<feature type="strand" evidence="9">
    <location>
        <begin position="255"/>
        <end position="261"/>
    </location>
</feature>
<feature type="helix" evidence="9">
    <location>
        <begin position="265"/>
        <end position="278"/>
    </location>
</feature>
<feature type="strand" evidence="9">
    <location>
        <begin position="282"/>
        <end position="286"/>
    </location>
</feature>
<feature type="strand" evidence="9">
    <location>
        <begin position="292"/>
        <end position="296"/>
    </location>
</feature>
<feature type="strand" evidence="9">
    <location>
        <begin position="299"/>
        <end position="304"/>
    </location>
</feature>
<feature type="helix" evidence="9">
    <location>
        <begin position="305"/>
        <end position="325"/>
    </location>
</feature>
<feature type="strand" evidence="9">
    <location>
        <begin position="332"/>
        <end position="338"/>
    </location>
</feature>
<feature type="helix" evidence="9">
    <location>
        <begin position="340"/>
        <end position="353"/>
    </location>
</feature>
<feature type="helix" evidence="9">
    <location>
        <begin position="363"/>
        <end position="365"/>
    </location>
</feature>
<feature type="strand" evidence="9">
    <location>
        <begin position="366"/>
        <end position="370"/>
    </location>
</feature>
<feature type="strand" evidence="9">
    <location>
        <begin position="373"/>
        <end position="377"/>
    </location>
</feature>
<feature type="helix" evidence="9">
    <location>
        <begin position="381"/>
        <end position="384"/>
    </location>
</feature>
<feature type="turn" evidence="9">
    <location>
        <begin position="390"/>
        <end position="392"/>
    </location>
</feature>
<feature type="helix" evidence="9">
    <location>
        <begin position="395"/>
        <end position="403"/>
    </location>
</feature>
<feature type="helix" evidence="9">
    <location>
        <begin position="404"/>
        <end position="406"/>
    </location>
</feature>
<feature type="strand" evidence="9">
    <location>
        <begin position="410"/>
        <end position="418"/>
    </location>
</feature>
<feature type="helix" evidence="9">
    <location>
        <begin position="427"/>
        <end position="440"/>
    </location>
</feature>
<feature type="strand" evidence="9">
    <location>
        <begin position="449"/>
        <end position="456"/>
    </location>
</feature>
<feature type="helix" evidence="9">
    <location>
        <begin position="464"/>
        <end position="473"/>
    </location>
</feature>
<feature type="helix" evidence="9">
    <location>
        <begin position="482"/>
        <end position="492"/>
    </location>
</feature>
<feature type="helix" evidence="9">
    <location>
        <begin position="506"/>
        <end position="509"/>
    </location>
</feature>
<feature type="strand" evidence="9">
    <location>
        <begin position="513"/>
        <end position="515"/>
    </location>
</feature>
<feature type="helix" evidence="9">
    <location>
        <begin position="519"/>
        <end position="527"/>
    </location>
</feature>
<feature type="strand" evidence="9">
    <location>
        <begin position="532"/>
        <end position="535"/>
    </location>
</feature>
<feature type="helix" evidence="9">
    <location>
        <begin position="545"/>
        <end position="554"/>
    </location>
</feature>
<accession>Q47208</accession>
<accession>Q2MBR0</accession>
<organism>
    <name type="scientific">Escherichia coli (strain K12)</name>
    <dbReference type="NCBI Taxonomy" id="83333"/>
    <lineage>
        <taxon>Bacteria</taxon>
        <taxon>Pseudomonadati</taxon>
        <taxon>Pseudomonadota</taxon>
        <taxon>Gammaproteobacteria</taxon>
        <taxon>Enterobacterales</taxon>
        <taxon>Enterobacteriaceae</taxon>
        <taxon>Escherichia</taxon>
    </lineage>
</organism>
<sequence>MIHAFIKKGCFQDSVSLMIISRKLSESENVDDVSVMMGTPANKALLDTTGFWHDDFNNATPNDICVAIRSEAADAGIAQAIMQQLEEALKQLAQGSGSSQALTQVRRWDSACQKLPDANLALISVAGEYAAELANQALDRNLNVMMFSDNVTLEDEIQLKTRAREKGLLVMGPDCGTSMIAGTPLAFANVMPEGNIGVIGASGTGIQELCSQIALAGEGITHAIGLGGRDLSREVGGISALTALEMLSADEKSEVLAFVSKPPAEAVRLKIVNAMKATGKPTVALFLGYTPAVARDENVWFASSLDEAARLACLLSRVTARRNAIAPVSSGFICGLYTGGTLAAEAAGLLAGHLGVEADDTHQHGMMLDADSHQIIDLGDDFYTVGRPHPMIDPTLRNQLIADLGAKPQVRVLLLDVVIGFGATADPAASLVSAWQKACAARLDNQPLYAIATVTGTERDPQCRSQQIATLEDAGIAVVSSLPEATLLAAALIHPLSPAAQQHTPSLLENVAVINIGLRSFALELQSASKPVVHYQWSPVAGGNKKLARLLERLQ</sequence>